<proteinExistence type="inferred from homology"/>
<name>FADB_PSEFS</name>
<comment type="function">
    <text evidence="1">Involved in the aerobic and anaerobic degradation of long-chain fatty acids via beta-oxidation cycle. Catalyzes the formation of 3-oxoacyl-CoA from enoyl-CoA via L-3-hydroxyacyl-CoA. It can also use D-3-hydroxyacyl-CoA and cis-3-enoyl-CoA as substrate.</text>
</comment>
<comment type="catalytic activity">
    <reaction evidence="1">
        <text>a (3S)-3-hydroxyacyl-CoA + NAD(+) = a 3-oxoacyl-CoA + NADH + H(+)</text>
        <dbReference type="Rhea" id="RHEA:22432"/>
        <dbReference type="ChEBI" id="CHEBI:15378"/>
        <dbReference type="ChEBI" id="CHEBI:57318"/>
        <dbReference type="ChEBI" id="CHEBI:57540"/>
        <dbReference type="ChEBI" id="CHEBI:57945"/>
        <dbReference type="ChEBI" id="CHEBI:90726"/>
        <dbReference type="EC" id="1.1.1.35"/>
    </reaction>
</comment>
<comment type="catalytic activity">
    <reaction evidence="1">
        <text>a (3S)-3-hydroxyacyl-CoA = a (2E)-enoyl-CoA + H2O</text>
        <dbReference type="Rhea" id="RHEA:16105"/>
        <dbReference type="ChEBI" id="CHEBI:15377"/>
        <dbReference type="ChEBI" id="CHEBI:57318"/>
        <dbReference type="ChEBI" id="CHEBI:58856"/>
        <dbReference type="EC" id="4.2.1.17"/>
    </reaction>
</comment>
<comment type="catalytic activity">
    <reaction evidence="1">
        <text>a 4-saturated-(3S)-3-hydroxyacyl-CoA = a (3E)-enoyl-CoA + H2O</text>
        <dbReference type="Rhea" id="RHEA:20724"/>
        <dbReference type="ChEBI" id="CHEBI:15377"/>
        <dbReference type="ChEBI" id="CHEBI:58521"/>
        <dbReference type="ChEBI" id="CHEBI:137480"/>
        <dbReference type="EC" id="4.2.1.17"/>
    </reaction>
</comment>
<comment type="catalytic activity">
    <reaction evidence="1">
        <text>(3S)-3-hydroxybutanoyl-CoA = (3R)-3-hydroxybutanoyl-CoA</text>
        <dbReference type="Rhea" id="RHEA:21760"/>
        <dbReference type="ChEBI" id="CHEBI:57315"/>
        <dbReference type="ChEBI" id="CHEBI:57316"/>
        <dbReference type="EC" id="5.1.2.3"/>
    </reaction>
</comment>
<comment type="catalytic activity">
    <reaction evidence="1">
        <text>a (3Z)-enoyl-CoA = a 4-saturated (2E)-enoyl-CoA</text>
        <dbReference type="Rhea" id="RHEA:45900"/>
        <dbReference type="ChEBI" id="CHEBI:85097"/>
        <dbReference type="ChEBI" id="CHEBI:85489"/>
        <dbReference type="EC" id="5.3.3.8"/>
    </reaction>
</comment>
<comment type="catalytic activity">
    <reaction evidence="1">
        <text>a (3E)-enoyl-CoA = a 4-saturated (2E)-enoyl-CoA</text>
        <dbReference type="Rhea" id="RHEA:45228"/>
        <dbReference type="ChEBI" id="CHEBI:58521"/>
        <dbReference type="ChEBI" id="CHEBI:85097"/>
        <dbReference type="EC" id="5.3.3.8"/>
    </reaction>
</comment>
<comment type="pathway">
    <text evidence="1">Lipid metabolism; fatty acid beta-oxidation.</text>
</comment>
<comment type="subunit">
    <text evidence="1">Heterotetramer of two alpha chains (FadB) and two beta chains (FadA).</text>
</comment>
<comment type="similarity">
    <text evidence="1">In the N-terminal section; belongs to the enoyl-CoA hydratase/isomerase family.</text>
</comment>
<comment type="similarity">
    <text evidence="1">In the C-terminal section; belongs to the 3-hydroxyacyl-CoA dehydrogenase family.</text>
</comment>
<sequence length="715" mass="76987">MIYEGKAITVKALESGIVELKFDLKGESVNKFNRLTLNELRQAVDTIKADASIKGVIVSSGKDVFIVGADITEFVDNFKLPDAELVAGNLEANKIFSDFEDLNVPTVAAINGIALGGGLEMCLAADFRVMSATAKIGLPEVKLGIYPGFGGTVRLPRLIGADNAIEWIAAGKENRAEDALKVGAVDAVVAPDKLAEAALNLIKGAISGEFDYKAKRQPKLEKLKLNAIEQMMSFETAKGFVAGQAGPNYPAPVEAIKTIQKAANFGRDKALEVEAAGFVKLAKTSAAQSLIGLFLNDQELKKKAKAYDEIARDVKQAAVLGAGIMGGGIAYQSASKGTPILMKDINEHGIEQGLAEAAKLLVGRVDKGRMTAAKMAEVLNGIRPTLSYGDFGHVDLVVEAVVENPKVKQAVLAEVEAQVKDDTILASNTSTISISLLAKALKRPENFVGMHFFNPVHMMPLVEVIRGEKSSELAVATTVAYAKKMGKNPIVVNDCPGFLVNRVLFPYFGGFAKLVSAGVDFVRIDKVMEKFGWPMGPAYLMDVVGIDTGHHGRDVMAEGFPDRMKDDRRSAIDALYEAKRLGQKNGKGFYAYEADKKGKQKKVADPSVHEVLAPVIYEQREVSDEDIINWMMIALCLETVRCLEDGIVETAAEADMGLVYGIGFPPFRGGALRYIDSIGVAEFVALADKYADLGPLYHPTAKLREMAKNGQSFFG</sequence>
<feature type="chain" id="PRO_1000215739" description="Fatty acid oxidation complex subunit alpha">
    <location>
        <begin position="1"/>
        <end position="715"/>
    </location>
</feature>
<feature type="region of interest" description="Enoyl-CoA hydratase/isomerase" evidence="1">
    <location>
        <begin position="1"/>
        <end position="190"/>
    </location>
</feature>
<feature type="region of interest" description="3-hydroxyacyl-CoA dehydrogenase" evidence="1">
    <location>
        <begin position="312"/>
        <end position="715"/>
    </location>
</feature>
<feature type="active site" description="For 3-hydroxyacyl-CoA dehydrogenase activity" evidence="1">
    <location>
        <position position="451"/>
    </location>
</feature>
<feature type="binding site" evidence="1">
    <location>
        <position position="297"/>
    </location>
    <ligand>
        <name>substrate</name>
    </ligand>
</feature>
<feature type="binding site" evidence="1">
    <location>
        <position position="325"/>
    </location>
    <ligand>
        <name>NAD(+)</name>
        <dbReference type="ChEBI" id="CHEBI:57540"/>
    </ligand>
</feature>
<feature type="binding site" evidence="1">
    <location>
        <position position="344"/>
    </location>
    <ligand>
        <name>NAD(+)</name>
        <dbReference type="ChEBI" id="CHEBI:57540"/>
    </ligand>
</feature>
<feature type="binding site" evidence="1">
    <location>
        <begin position="401"/>
        <end position="403"/>
    </location>
    <ligand>
        <name>NAD(+)</name>
        <dbReference type="ChEBI" id="CHEBI:57540"/>
    </ligand>
</feature>
<feature type="binding site" evidence="1">
    <location>
        <position position="408"/>
    </location>
    <ligand>
        <name>NAD(+)</name>
        <dbReference type="ChEBI" id="CHEBI:57540"/>
    </ligand>
</feature>
<feature type="binding site" evidence="1">
    <location>
        <position position="430"/>
    </location>
    <ligand>
        <name>NAD(+)</name>
        <dbReference type="ChEBI" id="CHEBI:57540"/>
    </ligand>
</feature>
<feature type="binding site" evidence="1">
    <location>
        <position position="454"/>
    </location>
    <ligand>
        <name>NAD(+)</name>
        <dbReference type="ChEBI" id="CHEBI:57540"/>
    </ligand>
</feature>
<feature type="binding site" evidence="1">
    <location>
        <position position="501"/>
    </location>
    <ligand>
        <name>substrate</name>
    </ligand>
</feature>
<feature type="binding site" evidence="1">
    <location>
        <position position="660"/>
    </location>
    <ligand>
        <name>substrate</name>
    </ligand>
</feature>
<feature type="site" description="Important for catalytic activity" evidence="1">
    <location>
        <position position="120"/>
    </location>
</feature>
<feature type="site" description="Important for catalytic activity" evidence="1">
    <location>
        <position position="140"/>
    </location>
</feature>
<keyword id="KW-0276">Fatty acid metabolism</keyword>
<keyword id="KW-0413">Isomerase</keyword>
<keyword id="KW-0442">Lipid degradation</keyword>
<keyword id="KW-0443">Lipid metabolism</keyword>
<keyword id="KW-0456">Lyase</keyword>
<keyword id="KW-0511">Multifunctional enzyme</keyword>
<keyword id="KW-0520">NAD</keyword>
<keyword id="KW-0560">Oxidoreductase</keyword>
<reference key="1">
    <citation type="journal article" date="2009" name="Genome Biol.">
        <title>Genomic and genetic analyses of diversity and plant interactions of Pseudomonas fluorescens.</title>
        <authorList>
            <person name="Silby M.W."/>
            <person name="Cerdeno-Tarraga A.M."/>
            <person name="Vernikos G.S."/>
            <person name="Giddens S.R."/>
            <person name="Jackson R.W."/>
            <person name="Preston G.M."/>
            <person name="Zhang X.-X."/>
            <person name="Moon C.D."/>
            <person name="Gehrig S.M."/>
            <person name="Godfrey S.A.C."/>
            <person name="Knight C.G."/>
            <person name="Malone J.G."/>
            <person name="Robinson Z."/>
            <person name="Spiers A.J."/>
            <person name="Harris S."/>
            <person name="Challis G.L."/>
            <person name="Yaxley A.M."/>
            <person name="Harris D."/>
            <person name="Seeger K."/>
            <person name="Murphy L."/>
            <person name="Rutter S."/>
            <person name="Squares R."/>
            <person name="Quail M.A."/>
            <person name="Saunders E."/>
            <person name="Mavromatis K."/>
            <person name="Brettin T.S."/>
            <person name="Bentley S.D."/>
            <person name="Hothersall J."/>
            <person name="Stephens E."/>
            <person name="Thomas C.M."/>
            <person name="Parkhill J."/>
            <person name="Levy S.B."/>
            <person name="Rainey P.B."/>
            <person name="Thomson N.R."/>
        </authorList>
    </citation>
    <scope>NUCLEOTIDE SEQUENCE [LARGE SCALE GENOMIC DNA]</scope>
    <source>
        <strain>SBW25</strain>
    </source>
</reference>
<protein>
    <recommendedName>
        <fullName evidence="1">Fatty acid oxidation complex subunit alpha</fullName>
    </recommendedName>
    <domain>
        <recommendedName>
            <fullName evidence="1">Enoyl-CoA hydratase/Delta(3)-cis-Delta(2)-trans-enoyl-CoA isomerase/3-hydroxybutyryl-CoA epimerase</fullName>
            <ecNumber evidence="1">4.2.1.17</ecNumber>
            <ecNumber evidence="1">5.1.2.3</ecNumber>
            <ecNumber evidence="1">5.3.3.8</ecNumber>
        </recommendedName>
    </domain>
    <domain>
        <recommendedName>
            <fullName evidence="1">3-hydroxyacyl-CoA dehydrogenase</fullName>
            <ecNumber evidence="1">1.1.1.35</ecNumber>
        </recommendedName>
    </domain>
</protein>
<dbReference type="EC" id="4.2.1.17" evidence="1"/>
<dbReference type="EC" id="5.1.2.3" evidence="1"/>
<dbReference type="EC" id="5.3.3.8" evidence="1"/>
<dbReference type="EC" id="1.1.1.35" evidence="1"/>
<dbReference type="EMBL" id="AM181176">
    <property type="protein sequence ID" value="CAY47802.1"/>
    <property type="molecule type" value="Genomic_DNA"/>
</dbReference>
<dbReference type="RefSeq" id="WP_012722844.1">
    <property type="nucleotide sequence ID" value="NC_012660.1"/>
</dbReference>
<dbReference type="SMR" id="C3K613"/>
<dbReference type="STRING" id="294.SRM1_03790"/>
<dbReference type="GeneID" id="93463164"/>
<dbReference type="eggNOG" id="COG1024">
    <property type="taxonomic scope" value="Bacteria"/>
</dbReference>
<dbReference type="eggNOG" id="COG1250">
    <property type="taxonomic scope" value="Bacteria"/>
</dbReference>
<dbReference type="HOGENOM" id="CLU_009834_16_3_6"/>
<dbReference type="OrthoDB" id="5389341at2"/>
<dbReference type="UniPathway" id="UPA00659"/>
<dbReference type="GO" id="GO:0036125">
    <property type="term" value="C:fatty acid beta-oxidation multienzyme complex"/>
    <property type="evidence" value="ECO:0007669"/>
    <property type="project" value="InterPro"/>
</dbReference>
<dbReference type="GO" id="GO:0008692">
    <property type="term" value="F:3-hydroxybutyryl-CoA epimerase activity"/>
    <property type="evidence" value="ECO:0007669"/>
    <property type="project" value="UniProtKB-UniRule"/>
</dbReference>
<dbReference type="GO" id="GO:0004165">
    <property type="term" value="F:delta(3)-delta(2)-enoyl-CoA isomerase activity"/>
    <property type="evidence" value="ECO:0007669"/>
    <property type="project" value="UniProtKB-UniRule"/>
</dbReference>
<dbReference type="GO" id="GO:0004300">
    <property type="term" value="F:enoyl-CoA hydratase activity"/>
    <property type="evidence" value="ECO:0007669"/>
    <property type="project" value="UniProtKB-UniRule"/>
</dbReference>
<dbReference type="GO" id="GO:0016509">
    <property type="term" value="F:long-chain-3-hydroxyacyl-CoA dehydrogenase activity"/>
    <property type="evidence" value="ECO:0007669"/>
    <property type="project" value="TreeGrafter"/>
</dbReference>
<dbReference type="GO" id="GO:0070403">
    <property type="term" value="F:NAD+ binding"/>
    <property type="evidence" value="ECO:0007669"/>
    <property type="project" value="InterPro"/>
</dbReference>
<dbReference type="GO" id="GO:0006635">
    <property type="term" value="P:fatty acid beta-oxidation"/>
    <property type="evidence" value="ECO:0007669"/>
    <property type="project" value="UniProtKB-UniRule"/>
</dbReference>
<dbReference type="CDD" id="cd06558">
    <property type="entry name" value="crotonase-like"/>
    <property type="match status" value="1"/>
</dbReference>
<dbReference type="FunFam" id="1.10.1040.50:FF:000001">
    <property type="entry name" value="Fatty acid oxidation complex subunit alpha"/>
    <property type="match status" value="1"/>
</dbReference>
<dbReference type="FunFam" id="3.90.226.10:FF:000018">
    <property type="entry name" value="Fatty acid oxidation complex subunit alpha"/>
    <property type="match status" value="1"/>
</dbReference>
<dbReference type="FunFam" id="3.40.50.720:FF:000009">
    <property type="entry name" value="Fatty oxidation complex, alpha subunit"/>
    <property type="match status" value="1"/>
</dbReference>
<dbReference type="Gene3D" id="1.10.1040.50">
    <property type="match status" value="1"/>
</dbReference>
<dbReference type="Gene3D" id="3.90.226.10">
    <property type="entry name" value="2-enoyl-CoA Hydratase, Chain A, domain 1"/>
    <property type="match status" value="1"/>
</dbReference>
<dbReference type="Gene3D" id="3.40.50.720">
    <property type="entry name" value="NAD(P)-binding Rossmann-like Domain"/>
    <property type="match status" value="1"/>
</dbReference>
<dbReference type="HAMAP" id="MF_01621">
    <property type="entry name" value="FadB"/>
    <property type="match status" value="1"/>
</dbReference>
<dbReference type="InterPro" id="IPR006180">
    <property type="entry name" value="3-OHacyl-CoA_DH_CS"/>
</dbReference>
<dbReference type="InterPro" id="IPR006176">
    <property type="entry name" value="3-OHacyl-CoA_DH_NAD-bd"/>
</dbReference>
<dbReference type="InterPro" id="IPR006108">
    <property type="entry name" value="3HC_DH_C"/>
</dbReference>
<dbReference type="InterPro" id="IPR008927">
    <property type="entry name" value="6-PGluconate_DH-like_C_sf"/>
</dbReference>
<dbReference type="InterPro" id="IPR029045">
    <property type="entry name" value="ClpP/crotonase-like_dom_sf"/>
</dbReference>
<dbReference type="InterPro" id="IPR018376">
    <property type="entry name" value="Enoyl-CoA_hyd/isom_CS"/>
</dbReference>
<dbReference type="InterPro" id="IPR001753">
    <property type="entry name" value="Enoyl-CoA_hydra/iso"/>
</dbReference>
<dbReference type="InterPro" id="IPR050136">
    <property type="entry name" value="FA_oxidation_alpha_subunit"/>
</dbReference>
<dbReference type="InterPro" id="IPR012799">
    <property type="entry name" value="FadB"/>
</dbReference>
<dbReference type="InterPro" id="IPR036291">
    <property type="entry name" value="NAD(P)-bd_dom_sf"/>
</dbReference>
<dbReference type="NCBIfam" id="TIGR02437">
    <property type="entry name" value="FadB"/>
    <property type="match status" value="1"/>
</dbReference>
<dbReference type="NCBIfam" id="NF008727">
    <property type="entry name" value="PRK11730.1"/>
    <property type="match status" value="1"/>
</dbReference>
<dbReference type="PANTHER" id="PTHR43612">
    <property type="entry name" value="TRIFUNCTIONAL ENZYME SUBUNIT ALPHA"/>
    <property type="match status" value="1"/>
</dbReference>
<dbReference type="PANTHER" id="PTHR43612:SF3">
    <property type="entry name" value="TRIFUNCTIONAL ENZYME SUBUNIT ALPHA, MITOCHONDRIAL"/>
    <property type="match status" value="1"/>
</dbReference>
<dbReference type="Pfam" id="PF00725">
    <property type="entry name" value="3HCDH"/>
    <property type="match status" value="1"/>
</dbReference>
<dbReference type="Pfam" id="PF02737">
    <property type="entry name" value="3HCDH_N"/>
    <property type="match status" value="1"/>
</dbReference>
<dbReference type="Pfam" id="PF00378">
    <property type="entry name" value="ECH_1"/>
    <property type="match status" value="1"/>
</dbReference>
<dbReference type="SUPFAM" id="SSF48179">
    <property type="entry name" value="6-phosphogluconate dehydrogenase C-terminal domain-like"/>
    <property type="match status" value="2"/>
</dbReference>
<dbReference type="SUPFAM" id="SSF52096">
    <property type="entry name" value="ClpP/crotonase"/>
    <property type="match status" value="1"/>
</dbReference>
<dbReference type="SUPFAM" id="SSF51735">
    <property type="entry name" value="NAD(P)-binding Rossmann-fold domains"/>
    <property type="match status" value="1"/>
</dbReference>
<dbReference type="PROSITE" id="PS00067">
    <property type="entry name" value="3HCDH"/>
    <property type="match status" value="1"/>
</dbReference>
<dbReference type="PROSITE" id="PS00166">
    <property type="entry name" value="ENOYL_COA_HYDRATASE"/>
    <property type="match status" value="1"/>
</dbReference>
<gene>
    <name evidence="1" type="primary">fadB</name>
    <name type="ordered locus">PFLU_1553</name>
</gene>
<evidence type="ECO:0000255" key="1">
    <source>
        <dbReference type="HAMAP-Rule" id="MF_01621"/>
    </source>
</evidence>
<accession>C3K613</accession>
<organism>
    <name type="scientific">Pseudomonas fluorescens (strain SBW25)</name>
    <dbReference type="NCBI Taxonomy" id="216595"/>
    <lineage>
        <taxon>Bacteria</taxon>
        <taxon>Pseudomonadati</taxon>
        <taxon>Pseudomonadota</taxon>
        <taxon>Gammaproteobacteria</taxon>
        <taxon>Pseudomonadales</taxon>
        <taxon>Pseudomonadaceae</taxon>
        <taxon>Pseudomonas</taxon>
    </lineage>
</organism>